<sequence length="597" mass="62373">MILPTALKSRLALEFETLPDPFRRPAARAAGLDPAHAWRLGWLAAVCLAAAAALFTADSGGWPVWAALGAGALPALVSLIFTREDERTQSWLLVLWAVGGSLAAVLTGGVGGAMAAWCLAPVAAASTQDQPKRLAEGAALALIGACVAALTQLSGLAPAAPTGPLAFVLGFLALVTTGLGLAAGLLIGRRRQGARDDRYASEIIGLETLLDGLPHLAIAVRGQGQVTAVRGAAPPGVTRADLVNRGLTGAAAPGDRQRLTAAIAQAHREGSASLTFNPALGVERVVALDMHRVAPNQLVGVLRDITVERHREHALDQARIDAEALAAGRARFLANMSHELRTPLNAIMGFSDIMRARMFGPLSDRYAEYAELIHESGGHLLDLINDVLDMSKIEAERFELQRGVFDAREAVQAAMRLLRVQSDTAGVQLRGVLPPGELEVDADRRALKQIVLNLVSNALKFTPRGGQVTVTAHGYDGVLEIVVADTGVGISPEDLERLGRPYEQAGGAEQRARGTGLGLSLVRAFAQLHGGEMVIESRLGAGTTVSVRLPVLLAPMVAATPTPPAAPEAPSAPEPAPTVEEPPPASLGDNVIAFAPR</sequence>
<dbReference type="EC" id="2.7.13.3"/>
<dbReference type="EMBL" id="M98873">
    <property type="protein sequence ID" value="AAA23034.2"/>
    <property type="molecule type" value="Genomic_DNA"/>
</dbReference>
<dbReference type="EMBL" id="AE005673">
    <property type="protein sequence ID" value="AAK23047.1"/>
    <property type="molecule type" value="Genomic_DNA"/>
</dbReference>
<dbReference type="PIR" id="C87381">
    <property type="entry name" value="C87381"/>
</dbReference>
<dbReference type="RefSeq" id="NP_419879.1">
    <property type="nucleotide sequence ID" value="NC_002696.2"/>
</dbReference>
<dbReference type="SMR" id="Q03228"/>
<dbReference type="DIP" id="DIP-46002N"/>
<dbReference type="IntAct" id="Q03228">
    <property type="interactions" value="3"/>
</dbReference>
<dbReference type="STRING" id="190650.CC_1063"/>
<dbReference type="ChEMBL" id="CHEMBL4295589"/>
<dbReference type="EnsemblBacteria" id="AAK23047">
    <property type="protein sequence ID" value="AAK23047"/>
    <property type="gene ID" value="CC_1063"/>
</dbReference>
<dbReference type="KEGG" id="ccr:CC_1063"/>
<dbReference type="PATRIC" id="fig|190650.5.peg.1080"/>
<dbReference type="eggNOG" id="COG2205">
    <property type="taxonomic scope" value="Bacteria"/>
</dbReference>
<dbReference type="HOGENOM" id="CLU_000445_89_22_5"/>
<dbReference type="BioCyc" id="CAULO:CC1063-MONOMER"/>
<dbReference type="Proteomes" id="UP000001816">
    <property type="component" value="Chromosome"/>
</dbReference>
<dbReference type="GO" id="GO:0005886">
    <property type="term" value="C:plasma membrane"/>
    <property type="evidence" value="ECO:0007669"/>
    <property type="project" value="UniProtKB-SubCell"/>
</dbReference>
<dbReference type="GO" id="GO:0005524">
    <property type="term" value="F:ATP binding"/>
    <property type="evidence" value="ECO:0007669"/>
    <property type="project" value="UniProtKB-KW"/>
</dbReference>
<dbReference type="GO" id="GO:0000155">
    <property type="term" value="F:phosphorelay sensor kinase activity"/>
    <property type="evidence" value="ECO:0000314"/>
    <property type="project" value="CACAO"/>
</dbReference>
<dbReference type="GO" id="GO:0030154">
    <property type="term" value="P:cell differentiation"/>
    <property type="evidence" value="ECO:0007669"/>
    <property type="project" value="UniProtKB-KW"/>
</dbReference>
<dbReference type="GO" id="GO:0051301">
    <property type="term" value="P:cell division"/>
    <property type="evidence" value="ECO:0007669"/>
    <property type="project" value="UniProtKB-KW"/>
</dbReference>
<dbReference type="GO" id="GO:0000160">
    <property type="term" value="P:phosphorelay signal transduction system"/>
    <property type="evidence" value="ECO:0000314"/>
    <property type="project" value="CACAO"/>
</dbReference>
<dbReference type="CDD" id="cd16922">
    <property type="entry name" value="HATPase_EvgS-ArcB-TorS-like"/>
    <property type="match status" value="1"/>
</dbReference>
<dbReference type="CDD" id="cd00082">
    <property type="entry name" value="HisKA"/>
    <property type="match status" value="1"/>
</dbReference>
<dbReference type="Gene3D" id="1.10.287.130">
    <property type="match status" value="1"/>
</dbReference>
<dbReference type="Gene3D" id="3.30.565.10">
    <property type="entry name" value="Histidine kinase-like ATPase, C-terminal domain"/>
    <property type="match status" value="1"/>
</dbReference>
<dbReference type="InterPro" id="IPR036890">
    <property type="entry name" value="HATPase_C_sf"/>
</dbReference>
<dbReference type="InterPro" id="IPR005467">
    <property type="entry name" value="His_kinase_dom"/>
</dbReference>
<dbReference type="InterPro" id="IPR003661">
    <property type="entry name" value="HisK_dim/P_dom"/>
</dbReference>
<dbReference type="InterPro" id="IPR036097">
    <property type="entry name" value="HisK_dim/P_sf"/>
</dbReference>
<dbReference type="InterPro" id="IPR050736">
    <property type="entry name" value="Sensor_HK_Regulatory"/>
</dbReference>
<dbReference type="InterPro" id="IPR004358">
    <property type="entry name" value="Sig_transdc_His_kin-like_C"/>
</dbReference>
<dbReference type="PANTHER" id="PTHR43711:SF31">
    <property type="entry name" value="HISTIDINE KINASE"/>
    <property type="match status" value="1"/>
</dbReference>
<dbReference type="PANTHER" id="PTHR43711">
    <property type="entry name" value="TWO-COMPONENT HISTIDINE KINASE"/>
    <property type="match status" value="1"/>
</dbReference>
<dbReference type="Pfam" id="PF02518">
    <property type="entry name" value="HATPase_c"/>
    <property type="match status" value="1"/>
</dbReference>
<dbReference type="Pfam" id="PF00512">
    <property type="entry name" value="HisKA"/>
    <property type="match status" value="1"/>
</dbReference>
<dbReference type="PRINTS" id="PR00344">
    <property type="entry name" value="BCTRLSENSOR"/>
</dbReference>
<dbReference type="SMART" id="SM00387">
    <property type="entry name" value="HATPase_c"/>
    <property type="match status" value="1"/>
</dbReference>
<dbReference type="SMART" id="SM00388">
    <property type="entry name" value="HisKA"/>
    <property type="match status" value="1"/>
</dbReference>
<dbReference type="SUPFAM" id="SSF55874">
    <property type="entry name" value="ATPase domain of HSP90 chaperone/DNA topoisomerase II/histidine kinase"/>
    <property type="match status" value="1"/>
</dbReference>
<dbReference type="SUPFAM" id="SSF47384">
    <property type="entry name" value="Homodimeric domain of signal transducing histidine kinase"/>
    <property type="match status" value="1"/>
</dbReference>
<dbReference type="PROSITE" id="PS50109">
    <property type="entry name" value="HIS_KIN"/>
    <property type="match status" value="1"/>
</dbReference>
<gene>
    <name type="primary">divJ</name>
    <name type="ordered locus">CC_1063</name>
</gene>
<accession>Q03228</accession>
<protein>
    <recommendedName>
        <fullName>Histidine protein kinase DivJ</fullName>
        <ecNumber>2.7.13.3</ecNumber>
    </recommendedName>
</protein>
<feature type="chain" id="PRO_0000074757" description="Histidine protein kinase DivJ">
    <location>
        <begin position="1"/>
        <end position="597"/>
    </location>
</feature>
<feature type="transmembrane region" description="Helical" evidence="1">
    <location>
        <begin position="40"/>
        <end position="57"/>
    </location>
</feature>
<feature type="transmembrane region" description="Helical" evidence="1">
    <location>
        <begin position="62"/>
        <end position="81"/>
    </location>
</feature>
<feature type="transmembrane region" description="Helical" evidence="1">
    <location>
        <begin position="91"/>
        <end position="109"/>
    </location>
</feature>
<feature type="transmembrane region" description="Helical" evidence="1">
    <location>
        <begin position="110"/>
        <end position="125"/>
    </location>
</feature>
<feature type="transmembrane region" description="Helical" evidence="1">
    <location>
        <begin position="137"/>
        <end position="158"/>
    </location>
</feature>
<feature type="transmembrane region" description="Helical" evidence="1">
    <location>
        <begin position="159"/>
        <end position="188"/>
    </location>
</feature>
<feature type="domain" description="Histidine kinase" evidence="2">
    <location>
        <begin position="335"/>
        <end position="553"/>
    </location>
</feature>
<feature type="region of interest" description="Disordered" evidence="3">
    <location>
        <begin position="561"/>
        <end position="597"/>
    </location>
</feature>
<feature type="compositionally biased region" description="Pro residues" evidence="3">
    <location>
        <begin position="561"/>
        <end position="585"/>
    </location>
</feature>
<feature type="modified residue" description="Phosphohistidine; by autocatalysis" evidence="2">
    <location>
        <position position="338"/>
    </location>
</feature>
<feature type="sequence conflict" description="In Ref. 1; AAA23034." evidence="4" ref="1">
    <original>H</original>
    <variation>L</variation>
    <location>
        <position position="529"/>
    </location>
</feature>
<organism>
    <name type="scientific">Caulobacter vibrioides (strain ATCC 19089 / CIP 103742 / CB 15)</name>
    <name type="common">Caulobacter crescentus</name>
    <dbReference type="NCBI Taxonomy" id="190650"/>
    <lineage>
        <taxon>Bacteria</taxon>
        <taxon>Pseudomonadati</taxon>
        <taxon>Pseudomonadota</taxon>
        <taxon>Alphaproteobacteria</taxon>
        <taxon>Caulobacterales</taxon>
        <taxon>Caulobacteraceae</taxon>
        <taxon>Caulobacter</taxon>
    </lineage>
</organism>
<evidence type="ECO:0000255" key="1"/>
<evidence type="ECO:0000255" key="2">
    <source>
        <dbReference type="PROSITE-ProRule" id="PRU00107"/>
    </source>
</evidence>
<evidence type="ECO:0000256" key="3">
    <source>
        <dbReference type="SAM" id="MobiDB-lite"/>
    </source>
</evidence>
<evidence type="ECO:0000305" key="4"/>
<comment type="function">
    <text>Kinase required for the regulation of cell division and differentiation. Is part of a signal transduction pathway, activating PleD by phosphorylation.</text>
</comment>
<comment type="catalytic activity">
    <reaction>
        <text>ATP + protein L-histidine = ADP + protein N-phospho-L-histidine.</text>
        <dbReference type="EC" id="2.7.13.3"/>
    </reaction>
</comment>
<comment type="interaction">
    <interactant intactId="EBI-1785038">
        <id>Q03228</id>
    </interactant>
    <interactant intactId="EBI-1784732">
        <id>Q9A5I5</id>
        <label>pleD</label>
    </interactant>
    <organismsDiffer>false</organismsDiffer>
    <experiments>3</experiments>
</comment>
<comment type="interaction">
    <interactant intactId="EBI-1785038">
        <id>Q03228</id>
    </interactant>
    <interactant intactId="EBI-1784754">
        <id>Q45976</id>
        <label>divK</label>
    </interactant>
    <organismsDiffer>true</organismsDiffer>
    <experiments>5</experiments>
</comment>
<comment type="subcellular location">
    <subcellularLocation>
        <location>Cell membrane</location>
        <topology>Multi-pass membrane protein</topology>
    </subcellularLocation>
</comment>
<name>DIVJ_CAUVC</name>
<keyword id="KW-0067">ATP-binding</keyword>
<keyword id="KW-0131">Cell cycle</keyword>
<keyword id="KW-0132">Cell division</keyword>
<keyword id="KW-1003">Cell membrane</keyword>
<keyword id="KW-0221">Differentiation</keyword>
<keyword id="KW-0418">Kinase</keyword>
<keyword id="KW-0472">Membrane</keyword>
<keyword id="KW-0547">Nucleotide-binding</keyword>
<keyword id="KW-0597">Phosphoprotein</keyword>
<keyword id="KW-1185">Reference proteome</keyword>
<keyword id="KW-0808">Transferase</keyword>
<keyword id="KW-0812">Transmembrane</keyword>
<keyword id="KW-1133">Transmembrane helix</keyword>
<keyword id="KW-0902">Two-component regulatory system</keyword>
<proteinExistence type="evidence at protein level"/>
<reference key="1">
    <citation type="journal article" date="1992" name="Proc. Natl. Acad. Sci. U.S.A.">
        <title>A histidine protein kinase homologue required for regulation of bacterial cell division and differentiation.</title>
        <authorList>
            <person name="Ohta N."/>
            <person name="Lane T."/>
            <person name="Ninfa E.G."/>
            <person name="Sommer J.M."/>
            <person name="Newton A."/>
        </authorList>
    </citation>
    <scope>NUCLEOTIDE SEQUENCE [GENOMIC DNA]</scope>
    <source>
        <strain>ATCC 19089 / CIP 103742 / CB 15</strain>
    </source>
</reference>
<reference key="2">
    <citation type="submission" date="2000-03" db="EMBL/GenBank/DDBJ databases">
        <authorList>
            <person name="Ohta N."/>
        </authorList>
    </citation>
    <scope>SEQUENCE REVISION TO 315-319</scope>
</reference>
<reference key="3">
    <citation type="journal article" date="2001" name="Proc. Natl. Acad. Sci. U.S.A.">
        <title>Complete genome sequence of Caulobacter crescentus.</title>
        <authorList>
            <person name="Nierman W.C."/>
            <person name="Feldblyum T.V."/>
            <person name="Laub M.T."/>
            <person name="Paulsen I.T."/>
            <person name="Nelson K.E."/>
            <person name="Eisen J.A."/>
            <person name="Heidelberg J.F."/>
            <person name="Alley M.R.K."/>
            <person name="Ohta N."/>
            <person name="Maddock J.R."/>
            <person name="Potocka I."/>
            <person name="Nelson W.C."/>
            <person name="Newton A."/>
            <person name="Stephens C."/>
            <person name="Phadke N.D."/>
            <person name="Ely B."/>
            <person name="DeBoy R.T."/>
            <person name="Dodson R.J."/>
            <person name="Durkin A.S."/>
            <person name="Gwinn M.L."/>
            <person name="Haft D.H."/>
            <person name="Kolonay J.F."/>
            <person name="Smit J."/>
            <person name="Craven M.B."/>
            <person name="Khouri H.M."/>
            <person name="Shetty J."/>
            <person name="Berry K.J."/>
            <person name="Utterback T.R."/>
            <person name="Tran K."/>
            <person name="Wolf A.M."/>
            <person name="Vamathevan J.J."/>
            <person name="Ermolaeva M.D."/>
            <person name="White O."/>
            <person name="Salzberg S.L."/>
            <person name="Venter J.C."/>
            <person name="Shapiro L."/>
            <person name="Fraser C.M."/>
        </authorList>
    </citation>
    <scope>NUCLEOTIDE SEQUENCE [LARGE SCALE GENOMIC DNA]</scope>
    <source>
        <strain>ATCC 19089 / CIP 103742 / CB 15</strain>
    </source>
</reference>
<reference key="4">
    <citation type="journal article" date="2004" name="Genes Dev.">
        <title>Cell cycle-dependent dynamic localization of a bacterial response regulator with a novel di-guanylate cyclase output domain.</title>
        <authorList>
            <person name="Paul R."/>
            <person name="Weiser S."/>
            <person name="Amiot N.C."/>
            <person name="Chan C."/>
            <person name="Schirmer T."/>
            <person name="Giese B."/>
            <person name="Jenal U."/>
        </authorList>
    </citation>
    <scope>PHOSPHORYLATION OF PLED</scope>
</reference>